<proteinExistence type="evidence at transcript level"/>
<organism>
    <name type="scientific">Bos taurus</name>
    <name type="common">Bovine</name>
    <dbReference type="NCBI Taxonomy" id="9913"/>
    <lineage>
        <taxon>Eukaryota</taxon>
        <taxon>Metazoa</taxon>
        <taxon>Chordata</taxon>
        <taxon>Craniata</taxon>
        <taxon>Vertebrata</taxon>
        <taxon>Euteleostomi</taxon>
        <taxon>Mammalia</taxon>
        <taxon>Eutheria</taxon>
        <taxon>Laurasiatheria</taxon>
        <taxon>Artiodactyla</taxon>
        <taxon>Ruminantia</taxon>
        <taxon>Pecora</taxon>
        <taxon>Bovidae</taxon>
        <taxon>Bovinae</taxon>
        <taxon>Bos</taxon>
    </lineage>
</organism>
<comment type="function">
    <text>Troponin T is the tropomyosin-binding subunit of troponin, the thin filament regulatory complex which confers calcium-sensitivity to striated muscle actomyosin ATPase activity.</text>
</comment>
<comment type="subunit">
    <text evidence="2">Interacts with TPM3.</text>
</comment>
<comment type="alternative products">
    <event type="alternative splicing"/>
    <isoform>
        <id>Q8MKH6-1</id>
        <name>1</name>
        <name>sTnT1</name>
        <sequence type="displayed"/>
    </isoform>
    <isoform>
        <id>Q8MKH6-2</id>
        <name>2</name>
        <name>sTnT2</name>
        <sequence type="described" ref="VSP_013785"/>
    </isoform>
</comment>
<comment type="tissue specificity">
    <text evidence="4">Expressed dominantly in slow muscles, like masseter, diaphragm, psoas major and spinnalis. Isoform 2 is also expressed in fast muscles.</text>
</comment>
<comment type="similarity">
    <text evidence="6">Belongs to the troponin T family.</text>
</comment>
<protein>
    <recommendedName>
        <fullName>Troponin T, slow skeletal muscle</fullName>
        <shortName>TnTs</shortName>
    </recommendedName>
    <alternativeName>
        <fullName>Slow skeletal muscle troponin T</fullName>
        <shortName>sTnT</shortName>
    </alternativeName>
</protein>
<accession>Q8MKH6</accession>
<accession>Q148J9</accession>
<accession>Q8MKH5</accession>
<evidence type="ECO:0000250" key="1"/>
<evidence type="ECO:0000250" key="2">
    <source>
        <dbReference type="UniProtKB" id="P13805"/>
    </source>
</evidence>
<evidence type="ECO:0000256" key="3">
    <source>
        <dbReference type="SAM" id="MobiDB-lite"/>
    </source>
</evidence>
<evidence type="ECO:0000269" key="4">
    <source>
    </source>
</evidence>
<evidence type="ECO:0000303" key="5">
    <source>
    </source>
</evidence>
<evidence type="ECO:0000305" key="6"/>
<gene>
    <name type="primary">TNNT1</name>
</gene>
<name>TNNT1_BOVIN</name>
<feature type="chain" id="PRO_0000186167" description="Troponin T, slow skeletal muscle">
    <location>
        <begin position="1"/>
        <end position="263"/>
    </location>
</feature>
<feature type="region of interest" description="Disordered" evidence="3">
    <location>
        <begin position="1"/>
        <end position="64"/>
    </location>
</feature>
<feature type="region of interest" description="Disordered" evidence="3">
    <location>
        <begin position="109"/>
        <end position="154"/>
    </location>
</feature>
<feature type="compositionally biased region" description="Acidic residues" evidence="3">
    <location>
        <begin position="1"/>
        <end position="38"/>
    </location>
</feature>
<feature type="compositionally biased region" description="Pro residues" evidence="3">
    <location>
        <begin position="44"/>
        <end position="56"/>
    </location>
</feature>
<feature type="compositionally biased region" description="Basic and acidic residues" evidence="3">
    <location>
        <begin position="109"/>
        <end position="150"/>
    </location>
</feature>
<feature type="modified residue" description="Phosphoserine; by CK2" evidence="1">
    <location>
        <position position="2"/>
    </location>
</feature>
<feature type="splice variant" id="VSP_013785" description="In isoform 2." evidence="5">
    <location>
        <begin position="26"/>
        <end position="36"/>
    </location>
</feature>
<sequence length="263" mass="31284">MSDAEEQEYEEEQPEEEEAAEEEEEAPEEPEPAAEPEEERPKPSRPVVPPLIPPKIPEGERVDFDDIHRKRMEKDLLELQTLIDVHFEQRKKEEEELVALKERIERRRAERAEQQRFRTEKERERQAKLAEEKMRKEEEEAKKRAEDDAKKKKVLSNMGAHFGGYLVKAEQKRGKRQTGREMKLRILSERKKPLNIDHMGEEQLREKAQELSDWIHQLESEKFDLMAKLKQQKYEINVLYNRISHAQKFRKGAGKGRVGGRWK</sequence>
<reference key="1">
    <citation type="journal article" date="2003" name="J. Anim. Sci.">
        <title>Amino acid sequences of multiple fast and slow troponin T isoforms expressed in adult bovine skeletal muscles.</title>
        <authorList>
            <person name="Muroya S."/>
            <person name="Nakajima I."/>
            <person name="Chikuni K."/>
        </authorList>
    </citation>
    <scope>NUCLEOTIDE SEQUENCE [MRNA] (ISOFORMS 1 AND 2)</scope>
    <scope>TISSUE SPECIFICITY</scope>
    <source>
        <strain>Holstein</strain>
        <tissue>Skeletal muscle</tissue>
    </source>
</reference>
<reference key="2">
    <citation type="submission" date="2006-06" db="EMBL/GenBank/DDBJ databases">
        <authorList>
            <consortium name="NIH - Mammalian Gene Collection (MGC) project"/>
        </authorList>
    </citation>
    <scope>NUCLEOTIDE SEQUENCE [LARGE SCALE MRNA] (ISOFORM 1)</scope>
    <source>
        <strain>Hereford</strain>
        <tissue>Fetal muscle</tissue>
    </source>
</reference>
<keyword id="KW-0025">Alternative splicing</keyword>
<keyword id="KW-0514">Muscle protein</keyword>
<keyword id="KW-0597">Phosphoprotein</keyword>
<keyword id="KW-1185">Reference proteome</keyword>
<dbReference type="EMBL" id="AB085601">
    <property type="protein sequence ID" value="BAB92984.1"/>
    <property type="molecule type" value="mRNA"/>
</dbReference>
<dbReference type="EMBL" id="AB085600">
    <property type="protein sequence ID" value="BAB92983.1"/>
    <property type="molecule type" value="mRNA"/>
</dbReference>
<dbReference type="EMBL" id="BC118248">
    <property type="protein sequence ID" value="AAI18249.1"/>
    <property type="molecule type" value="mRNA"/>
</dbReference>
<dbReference type="RefSeq" id="NP_776899.1">
    <molecule id="Q8MKH6-1"/>
    <property type="nucleotide sequence ID" value="NM_174474.1"/>
</dbReference>
<dbReference type="RefSeq" id="XP_005219724.1">
    <molecule id="Q8MKH6-1"/>
    <property type="nucleotide sequence ID" value="XM_005219667.5"/>
</dbReference>
<dbReference type="RefSeq" id="XP_005219728.1">
    <molecule id="Q8MKH6-2"/>
    <property type="nucleotide sequence ID" value="XM_005219671.5"/>
</dbReference>
<dbReference type="RefSeq" id="XP_010813770.1">
    <molecule id="Q8MKH6-1"/>
    <property type="nucleotide sequence ID" value="XM_010815468.3"/>
</dbReference>
<dbReference type="SMR" id="Q8MKH6"/>
<dbReference type="FunCoup" id="Q8MKH6">
    <property type="interactions" value="53"/>
</dbReference>
<dbReference type="STRING" id="9913.ENSBTAP00000073026"/>
<dbReference type="PaxDb" id="9913-ENSBTAP00000008420"/>
<dbReference type="GeneID" id="282095"/>
<dbReference type="KEGG" id="bta:282095"/>
<dbReference type="CTD" id="7138"/>
<dbReference type="VEuPathDB" id="HostDB:ENSBTAG00000006419"/>
<dbReference type="eggNOG" id="KOG3634">
    <property type="taxonomic scope" value="Eukaryota"/>
</dbReference>
<dbReference type="HOGENOM" id="CLU_076377_0_0_1"/>
<dbReference type="InParanoid" id="Q8MKH6"/>
<dbReference type="OMA" id="EWIYELE"/>
<dbReference type="OrthoDB" id="330499at2759"/>
<dbReference type="TreeFam" id="TF313321"/>
<dbReference type="Reactome" id="R-BTA-390522">
    <property type="pathway name" value="Striated Muscle Contraction"/>
</dbReference>
<dbReference type="Proteomes" id="UP000009136">
    <property type="component" value="Chromosome 18"/>
</dbReference>
<dbReference type="Bgee" id="ENSBTAG00000006419">
    <property type="expression patterns" value="Expressed in laryngeal cartilage and 89 other cell types or tissues"/>
</dbReference>
<dbReference type="GO" id="GO:0005861">
    <property type="term" value="C:troponin complex"/>
    <property type="evidence" value="ECO:0000318"/>
    <property type="project" value="GO_Central"/>
</dbReference>
<dbReference type="GO" id="GO:0005523">
    <property type="term" value="F:tropomyosin binding"/>
    <property type="evidence" value="ECO:0000318"/>
    <property type="project" value="GO_Central"/>
</dbReference>
<dbReference type="GO" id="GO:0031014">
    <property type="term" value="F:troponin T binding"/>
    <property type="evidence" value="ECO:0000318"/>
    <property type="project" value="GO_Central"/>
</dbReference>
<dbReference type="GO" id="GO:0006937">
    <property type="term" value="P:regulation of muscle contraction"/>
    <property type="evidence" value="ECO:0007669"/>
    <property type="project" value="InterPro"/>
</dbReference>
<dbReference type="GO" id="GO:0031444">
    <property type="term" value="P:slow-twitch skeletal muscle fiber contraction"/>
    <property type="evidence" value="ECO:0000318"/>
    <property type="project" value="GO_Central"/>
</dbReference>
<dbReference type="FunFam" id="1.20.5.350:FF:000001">
    <property type="entry name" value="Troponin T, fast skeletal muscle"/>
    <property type="match status" value="1"/>
</dbReference>
<dbReference type="Gene3D" id="1.20.5.350">
    <property type="match status" value="1"/>
</dbReference>
<dbReference type="InterPro" id="IPR027707">
    <property type="entry name" value="TNNT"/>
</dbReference>
<dbReference type="InterPro" id="IPR001978">
    <property type="entry name" value="Troponin"/>
</dbReference>
<dbReference type="InterPro" id="IPR038077">
    <property type="entry name" value="Troponin_sf"/>
</dbReference>
<dbReference type="PANTHER" id="PTHR11521">
    <property type="entry name" value="TROPONIN T"/>
    <property type="match status" value="1"/>
</dbReference>
<dbReference type="PANTHER" id="PTHR11521:SF6">
    <property type="entry name" value="TROPONIN T, SLOW SKELETAL MUSCLE"/>
    <property type="match status" value="1"/>
</dbReference>
<dbReference type="Pfam" id="PF00992">
    <property type="entry name" value="Troponin"/>
    <property type="match status" value="2"/>
</dbReference>
<dbReference type="SUPFAM" id="SSF90250">
    <property type="entry name" value="Troponin coil-coiled subunits"/>
    <property type="match status" value="1"/>
</dbReference>